<evidence type="ECO:0000255" key="1">
    <source>
        <dbReference type="HAMAP-Rule" id="MF_00523"/>
    </source>
</evidence>
<feature type="chain" id="PRO_1000211749" description="UDP-3-O-acylglucosamine N-acyltransferase">
    <location>
        <begin position="1"/>
        <end position="352"/>
    </location>
</feature>
<feature type="active site" description="Proton acceptor" evidence="1">
    <location>
        <position position="244"/>
    </location>
</feature>
<organism>
    <name type="scientific">Leptospira biflexa serovar Patoc (strain Patoc 1 / ATCC 23582 / Paris)</name>
    <dbReference type="NCBI Taxonomy" id="456481"/>
    <lineage>
        <taxon>Bacteria</taxon>
        <taxon>Pseudomonadati</taxon>
        <taxon>Spirochaetota</taxon>
        <taxon>Spirochaetia</taxon>
        <taxon>Leptospirales</taxon>
        <taxon>Leptospiraceae</taxon>
        <taxon>Leptospira</taxon>
    </lineage>
</organism>
<comment type="function">
    <text evidence="1">Catalyzes the N-acylation of UDP-3-O-acylglucosamine using 3-hydroxyacyl-ACP as the acyl donor. Is involved in the biosynthesis of lipid A, a phosphorylated glycolipid that anchors the lipopolysaccharide to the outer membrane of the cell.</text>
</comment>
<comment type="catalytic activity">
    <reaction evidence="1">
        <text>a UDP-3-O-[(3R)-3-hydroxyacyl]-alpha-D-glucosamine + a (3R)-hydroxyacyl-[ACP] = a UDP-2-N,3-O-bis[(3R)-3-hydroxyacyl]-alpha-D-glucosamine + holo-[ACP] + H(+)</text>
        <dbReference type="Rhea" id="RHEA:53836"/>
        <dbReference type="Rhea" id="RHEA-COMP:9685"/>
        <dbReference type="Rhea" id="RHEA-COMP:9945"/>
        <dbReference type="ChEBI" id="CHEBI:15378"/>
        <dbReference type="ChEBI" id="CHEBI:64479"/>
        <dbReference type="ChEBI" id="CHEBI:78827"/>
        <dbReference type="ChEBI" id="CHEBI:137740"/>
        <dbReference type="ChEBI" id="CHEBI:137748"/>
        <dbReference type="EC" id="2.3.1.191"/>
    </reaction>
</comment>
<comment type="pathway">
    <text evidence="1">Bacterial outer membrane biogenesis; LPS lipid A biosynthesis.</text>
</comment>
<comment type="subunit">
    <text evidence="1">Homotrimer.</text>
</comment>
<comment type="similarity">
    <text evidence="1">Belongs to the transferase hexapeptide repeat family. LpxD subfamily.</text>
</comment>
<proteinExistence type="inferred from homology"/>
<reference key="1">
    <citation type="journal article" date="2008" name="PLoS ONE">
        <title>Genome sequence of the saprophyte Leptospira biflexa provides insights into the evolution of Leptospira and the pathogenesis of leptospirosis.</title>
        <authorList>
            <person name="Picardeau M."/>
            <person name="Bulach D.M."/>
            <person name="Bouchier C."/>
            <person name="Zuerner R.L."/>
            <person name="Zidane N."/>
            <person name="Wilson P.J."/>
            <person name="Creno S."/>
            <person name="Kuczek E.S."/>
            <person name="Bommezzadri S."/>
            <person name="Davis J.C."/>
            <person name="McGrath A."/>
            <person name="Johnson M.J."/>
            <person name="Boursaux-Eude C."/>
            <person name="Seemann T."/>
            <person name="Rouy Z."/>
            <person name="Coppel R.L."/>
            <person name="Rood J.I."/>
            <person name="Lajus A."/>
            <person name="Davies J.K."/>
            <person name="Medigue C."/>
            <person name="Adler B."/>
        </authorList>
    </citation>
    <scope>NUCLEOTIDE SEQUENCE [LARGE SCALE GENOMIC DNA]</scope>
    <source>
        <strain>Patoc 1 / ATCC 23582 / Paris</strain>
    </source>
</reference>
<dbReference type="EC" id="2.3.1.191" evidence="1"/>
<dbReference type="EMBL" id="CP000786">
    <property type="protein sequence ID" value="ABZ96790.1"/>
    <property type="molecule type" value="Genomic_DNA"/>
</dbReference>
<dbReference type="RefSeq" id="WP_012387677.1">
    <property type="nucleotide sequence ID" value="NC_010602.1"/>
</dbReference>
<dbReference type="SMR" id="B0SKN3"/>
<dbReference type="STRING" id="456481.LEPBI_I0657"/>
<dbReference type="KEGG" id="lbi:LEPBI_I0657"/>
<dbReference type="HOGENOM" id="CLU_049865_0_0_12"/>
<dbReference type="OrthoDB" id="9784739at2"/>
<dbReference type="BioCyc" id="LBIF456481:LEPBI_RS03235-MONOMER"/>
<dbReference type="UniPathway" id="UPA00973"/>
<dbReference type="Proteomes" id="UP000001847">
    <property type="component" value="Chromosome I"/>
</dbReference>
<dbReference type="GO" id="GO:0016020">
    <property type="term" value="C:membrane"/>
    <property type="evidence" value="ECO:0007669"/>
    <property type="project" value="GOC"/>
</dbReference>
<dbReference type="GO" id="GO:0016410">
    <property type="term" value="F:N-acyltransferase activity"/>
    <property type="evidence" value="ECO:0007669"/>
    <property type="project" value="InterPro"/>
</dbReference>
<dbReference type="GO" id="GO:0009245">
    <property type="term" value="P:lipid A biosynthetic process"/>
    <property type="evidence" value="ECO:0007669"/>
    <property type="project" value="UniProtKB-UniRule"/>
</dbReference>
<dbReference type="CDD" id="cd03352">
    <property type="entry name" value="LbH_LpxD"/>
    <property type="match status" value="1"/>
</dbReference>
<dbReference type="Gene3D" id="2.160.10.10">
    <property type="entry name" value="Hexapeptide repeat proteins"/>
    <property type="match status" value="1"/>
</dbReference>
<dbReference type="Gene3D" id="3.40.1390.10">
    <property type="entry name" value="MurE/MurF, N-terminal domain"/>
    <property type="match status" value="1"/>
</dbReference>
<dbReference type="HAMAP" id="MF_00523">
    <property type="entry name" value="LpxD"/>
    <property type="match status" value="1"/>
</dbReference>
<dbReference type="InterPro" id="IPR001451">
    <property type="entry name" value="Hexapep"/>
</dbReference>
<dbReference type="InterPro" id="IPR007691">
    <property type="entry name" value="LpxD"/>
</dbReference>
<dbReference type="InterPro" id="IPR011004">
    <property type="entry name" value="Trimer_LpxA-like_sf"/>
</dbReference>
<dbReference type="InterPro" id="IPR020573">
    <property type="entry name" value="UDP_GlcNAc_AcTrfase_non-rep"/>
</dbReference>
<dbReference type="NCBIfam" id="TIGR01853">
    <property type="entry name" value="lipid_A_lpxD"/>
    <property type="match status" value="1"/>
</dbReference>
<dbReference type="NCBIfam" id="NF002060">
    <property type="entry name" value="PRK00892.1"/>
    <property type="match status" value="1"/>
</dbReference>
<dbReference type="PANTHER" id="PTHR43378">
    <property type="entry name" value="UDP-3-O-ACYLGLUCOSAMINE N-ACYLTRANSFERASE"/>
    <property type="match status" value="1"/>
</dbReference>
<dbReference type="PANTHER" id="PTHR43378:SF2">
    <property type="entry name" value="UDP-3-O-ACYLGLUCOSAMINE N-ACYLTRANSFERASE 1, MITOCHONDRIAL-RELATED"/>
    <property type="match status" value="1"/>
</dbReference>
<dbReference type="Pfam" id="PF00132">
    <property type="entry name" value="Hexapep"/>
    <property type="match status" value="2"/>
</dbReference>
<dbReference type="Pfam" id="PF04613">
    <property type="entry name" value="LpxD"/>
    <property type="match status" value="1"/>
</dbReference>
<dbReference type="SUPFAM" id="SSF51161">
    <property type="entry name" value="Trimeric LpxA-like enzymes"/>
    <property type="match status" value="1"/>
</dbReference>
<name>LPXD_LEPBP</name>
<protein>
    <recommendedName>
        <fullName evidence="1">UDP-3-O-acylglucosamine N-acyltransferase</fullName>
        <ecNumber evidence="1">2.3.1.191</ecNumber>
    </recommendedName>
</protein>
<accession>B0SKN3</accession>
<gene>
    <name evidence="1" type="primary">lpxD</name>
    <name type="ordered locus">LEPBI_I0657</name>
</gene>
<keyword id="KW-0012">Acyltransferase</keyword>
<keyword id="KW-0441">Lipid A biosynthesis</keyword>
<keyword id="KW-0444">Lipid biosynthesis</keyword>
<keyword id="KW-0443">Lipid metabolism</keyword>
<keyword id="KW-1185">Reference proteome</keyword>
<keyword id="KW-0677">Repeat</keyword>
<keyword id="KW-0808">Transferase</keyword>
<sequence>MTQIKLSTLQTLLPDATFQNSETLKDINFSGLTSLTLAGPSDISFVASKTFVNEAKASKASLLVVSQETAEALSDKAIIIVSKVELTTAKIIRLFFPEKQPSGKRSAQVAIDPSAKIGSNTDIGHFVTIGKDSIIGNDCIIEDGVKIGDRVQIGDGARIGKNCVFFDDTIVGKRFIAFGNSTFGGDGFGFVYAEGKHNKIPQVGRVVIGDDVEVGSNCTIDRGALTDTTIGNGCKFDNMVHVAHNCKVGDHVIIAGQSGLAGSVTLGNNVIIGGACAISDHLTLVDGTIIAGGSSLRTSPKTKDVYVGWDLGLTFPEFQKYRVNIKNIVNLNKWLKRIENIEKKVGIETKES</sequence>